<sequence>MTQSPRACSAPPARPLLIVAGPTASGKSALALAAAQRFGGTIINADAMQCYADWRIITARPTPADEAAAPHRLYGVRRLEEAVDAAWWRGRALAELAAAELPILCGGTGMYLSSLVNGIAPIPDPGPNARAEARRMLAADGPAALHAWLAARDPATATKLRPSDPQRLARAAEVLLGTGRGLAAWHAAPRAGLAGYRVMLLLLDPPRPALREAIAARFEAMLAAGALAEVAAVAARAPDPALPGLRAHGVPELLAHLAGAISLDEAASRAIAATAAYTKRQATWFRHQKLADQRNTHTIRSRLTDSTQFSESTVRSIISFINLSS</sequence>
<protein>
    <recommendedName>
        <fullName evidence="1">tRNA dimethylallyltransferase</fullName>
        <ecNumber evidence="1">2.5.1.75</ecNumber>
    </recommendedName>
    <alternativeName>
        <fullName evidence="1">Dimethylallyl diphosphate:tRNA dimethylallyltransferase</fullName>
        <shortName evidence="1">DMAPP:tRNA dimethylallyltransferase</shortName>
        <shortName evidence="1">DMATase</shortName>
    </alternativeName>
    <alternativeName>
        <fullName evidence="1">Isopentenyl-diphosphate:tRNA isopentenyltransferase</fullName>
        <shortName evidence="1">IPP transferase</shortName>
        <shortName evidence="1">IPPT</shortName>
        <shortName evidence="1">IPTase</shortName>
    </alternativeName>
</protein>
<name>MIAA_ACICJ</name>
<gene>
    <name evidence="1" type="primary">miaA</name>
    <name type="ordered locus">Acry_2834</name>
</gene>
<dbReference type="EC" id="2.5.1.75" evidence="1"/>
<dbReference type="EMBL" id="CP000697">
    <property type="protein sequence ID" value="ABQ32024.1"/>
    <property type="status" value="ALT_INIT"/>
    <property type="molecule type" value="Genomic_DNA"/>
</dbReference>
<dbReference type="RefSeq" id="WP_043509255.1">
    <property type="nucleotide sequence ID" value="NC_009484.1"/>
</dbReference>
<dbReference type="SMR" id="A5G2E2"/>
<dbReference type="STRING" id="349163.Acry_2834"/>
<dbReference type="KEGG" id="acr:Acry_2834"/>
<dbReference type="eggNOG" id="COG0324">
    <property type="taxonomic scope" value="Bacteria"/>
</dbReference>
<dbReference type="HOGENOM" id="CLU_032616_0_1_5"/>
<dbReference type="Proteomes" id="UP000000245">
    <property type="component" value="Chromosome"/>
</dbReference>
<dbReference type="GO" id="GO:0005524">
    <property type="term" value="F:ATP binding"/>
    <property type="evidence" value="ECO:0007669"/>
    <property type="project" value="UniProtKB-UniRule"/>
</dbReference>
<dbReference type="GO" id="GO:0052381">
    <property type="term" value="F:tRNA dimethylallyltransferase activity"/>
    <property type="evidence" value="ECO:0007669"/>
    <property type="project" value="UniProtKB-UniRule"/>
</dbReference>
<dbReference type="GO" id="GO:0006400">
    <property type="term" value="P:tRNA modification"/>
    <property type="evidence" value="ECO:0007669"/>
    <property type="project" value="TreeGrafter"/>
</dbReference>
<dbReference type="Gene3D" id="1.10.20.140">
    <property type="match status" value="1"/>
</dbReference>
<dbReference type="Gene3D" id="3.40.50.300">
    <property type="entry name" value="P-loop containing nucleotide triphosphate hydrolases"/>
    <property type="match status" value="1"/>
</dbReference>
<dbReference type="HAMAP" id="MF_00185">
    <property type="entry name" value="IPP_trans"/>
    <property type="match status" value="1"/>
</dbReference>
<dbReference type="InterPro" id="IPR039657">
    <property type="entry name" value="Dimethylallyltransferase"/>
</dbReference>
<dbReference type="InterPro" id="IPR018022">
    <property type="entry name" value="IPT"/>
</dbReference>
<dbReference type="InterPro" id="IPR027417">
    <property type="entry name" value="P-loop_NTPase"/>
</dbReference>
<dbReference type="NCBIfam" id="TIGR00174">
    <property type="entry name" value="miaA"/>
    <property type="match status" value="1"/>
</dbReference>
<dbReference type="PANTHER" id="PTHR11088">
    <property type="entry name" value="TRNA DIMETHYLALLYLTRANSFERASE"/>
    <property type="match status" value="1"/>
</dbReference>
<dbReference type="PANTHER" id="PTHR11088:SF60">
    <property type="entry name" value="TRNA DIMETHYLALLYLTRANSFERASE"/>
    <property type="match status" value="1"/>
</dbReference>
<dbReference type="Pfam" id="PF01715">
    <property type="entry name" value="IPPT"/>
    <property type="match status" value="1"/>
</dbReference>
<dbReference type="SUPFAM" id="SSF52540">
    <property type="entry name" value="P-loop containing nucleoside triphosphate hydrolases"/>
    <property type="match status" value="2"/>
</dbReference>
<comment type="function">
    <text evidence="1">Catalyzes the transfer of a dimethylallyl group onto the adenine at position 37 in tRNAs that read codons beginning with uridine, leading to the formation of N6-(dimethylallyl)adenosine (i(6)A).</text>
</comment>
<comment type="catalytic activity">
    <reaction evidence="1">
        <text>adenosine(37) in tRNA + dimethylallyl diphosphate = N(6)-dimethylallyladenosine(37) in tRNA + diphosphate</text>
        <dbReference type="Rhea" id="RHEA:26482"/>
        <dbReference type="Rhea" id="RHEA-COMP:10162"/>
        <dbReference type="Rhea" id="RHEA-COMP:10375"/>
        <dbReference type="ChEBI" id="CHEBI:33019"/>
        <dbReference type="ChEBI" id="CHEBI:57623"/>
        <dbReference type="ChEBI" id="CHEBI:74411"/>
        <dbReference type="ChEBI" id="CHEBI:74415"/>
        <dbReference type="EC" id="2.5.1.75"/>
    </reaction>
</comment>
<comment type="cofactor">
    <cofactor evidence="1">
        <name>Mg(2+)</name>
        <dbReference type="ChEBI" id="CHEBI:18420"/>
    </cofactor>
</comment>
<comment type="subunit">
    <text evidence="1">Monomer.</text>
</comment>
<comment type="similarity">
    <text evidence="1">Belongs to the IPP transferase family.</text>
</comment>
<comment type="sequence caution" evidence="2">
    <conflict type="erroneous initiation">
        <sequence resource="EMBL-CDS" id="ABQ32024"/>
    </conflict>
</comment>
<reference key="1">
    <citation type="submission" date="2007-05" db="EMBL/GenBank/DDBJ databases">
        <title>Complete sequence of chromosome of Acidiphilium cryptum JF-5.</title>
        <authorList>
            <consortium name="US DOE Joint Genome Institute"/>
            <person name="Copeland A."/>
            <person name="Lucas S."/>
            <person name="Lapidus A."/>
            <person name="Barry K."/>
            <person name="Detter J.C."/>
            <person name="Glavina del Rio T."/>
            <person name="Hammon N."/>
            <person name="Israni S."/>
            <person name="Dalin E."/>
            <person name="Tice H."/>
            <person name="Pitluck S."/>
            <person name="Sims D."/>
            <person name="Brettin T."/>
            <person name="Bruce D."/>
            <person name="Han C."/>
            <person name="Schmutz J."/>
            <person name="Larimer F."/>
            <person name="Land M."/>
            <person name="Hauser L."/>
            <person name="Kyrpides N."/>
            <person name="Kim E."/>
            <person name="Magnuson T."/>
            <person name="Richardson P."/>
        </authorList>
    </citation>
    <scope>NUCLEOTIDE SEQUENCE [LARGE SCALE GENOMIC DNA]</scope>
    <source>
        <strain>JF-5</strain>
    </source>
</reference>
<proteinExistence type="inferred from homology"/>
<organism>
    <name type="scientific">Acidiphilium cryptum (strain JF-5)</name>
    <dbReference type="NCBI Taxonomy" id="349163"/>
    <lineage>
        <taxon>Bacteria</taxon>
        <taxon>Pseudomonadati</taxon>
        <taxon>Pseudomonadota</taxon>
        <taxon>Alphaproteobacteria</taxon>
        <taxon>Acetobacterales</taxon>
        <taxon>Acidocellaceae</taxon>
        <taxon>Acidiphilium</taxon>
    </lineage>
</organism>
<feature type="chain" id="PRO_0000377043" description="tRNA dimethylallyltransferase">
    <location>
        <begin position="1"/>
        <end position="325"/>
    </location>
</feature>
<feature type="region of interest" description="Interaction with substrate tRNA" evidence="1">
    <location>
        <begin position="166"/>
        <end position="170"/>
    </location>
</feature>
<feature type="binding site" evidence="1">
    <location>
        <begin position="21"/>
        <end position="28"/>
    </location>
    <ligand>
        <name>ATP</name>
        <dbReference type="ChEBI" id="CHEBI:30616"/>
    </ligand>
</feature>
<feature type="binding site" evidence="1">
    <location>
        <begin position="23"/>
        <end position="28"/>
    </location>
    <ligand>
        <name>substrate</name>
    </ligand>
</feature>
<feature type="site" description="Interaction with substrate tRNA" evidence="1">
    <location>
        <position position="108"/>
    </location>
</feature>
<feature type="site" description="Interaction with substrate tRNA" evidence="1">
    <location>
        <position position="130"/>
    </location>
</feature>
<accession>A5G2E2</accession>
<evidence type="ECO:0000255" key="1">
    <source>
        <dbReference type="HAMAP-Rule" id="MF_00185"/>
    </source>
</evidence>
<evidence type="ECO:0000305" key="2"/>
<keyword id="KW-0067">ATP-binding</keyword>
<keyword id="KW-0460">Magnesium</keyword>
<keyword id="KW-0547">Nucleotide-binding</keyword>
<keyword id="KW-1185">Reference proteome</keyword>
<keyword id="KW-0808">Transferase</keyword>
<keyword id="KW-0819">tRNA processing</keyword>